<accession>Q46LT7</accession>
<feature type="chain" id="PRO_0000325373" description="3-phosphoshikimate 1-carboxyvinyltransferase">
    <location>
        <begin position="1"/>
        <end position="444"/>
    </location>
</feature>
<feature type="active site" description="Proton acceptor" evidence="1">
    <location>
        <position position="329"/>
    </location>
</feature>
<feature type="binding site" evidence="1">
    <location>
        <position position="29"/>
    </location>
    <ligand>
        <name>3-phosphoshikimate</name>
        <dbReference type="ChEBI" id="CHEBI:145989"/>
    </ligand>
</feature>
<feature type="binding site" evidence="1">
    <location>
        <position position="29"/>
    </location>
    <ligand>
        <name>phosphoenolpyruvate</name>
        <dbReference type="ChEBI" id="CHEBI:58702"/>
    </ligand>
</feature>
<feature type="binding site" evidence="1">
    <location>
        <position position="30"/>
    </location>
    <ligand>
        <name>3-phosphoshikimate</name>
        <dbReference type="ChEBI" id="CHEBI:145989"/>
    </ligand>
</feature>
<feature type="binding site" evidence="1">
    <location>
        <position position="34"/>
    </location>
    <ligand>
        <name>3-phosphoshikimate</name>
        <dbReference type="ChEBI" id="CHEBI:145989"/>
    </ligand>
</feature>
<feature type="binding site" evidence="1">
    <location>
        <position position="103"/>
    </location>
    <ligand>
        <name>phosphoenolpyruvate</name>
        <dbReference type="ChEBI" id="CHEBI:58702"/>
    </ligand>
</feature>
<feature type="binding site" evidence="1">
    <location>
        <position position="132"/>
    </location>
    <ligand>
        <name>phosphoenolpyruvate</name>
        <dbReference type="ChEBI" id="CHEBI:58702"/>
    </ligand>
</feature>
<feature type="binding site" evidence="1">
    <location>
        <position position="177"/>
    </location>
    <ligand>
        <name>3-phosphoshikimate</name>
        <dbReference type="ChEBI" id="CHEBI:145989"/>
    </ligand>
</feature>
<feature type="binding site" evidence="1">
    <location>
        <position position="179"/>
    </location>
    <ligand>
        <name>3-phosphoshikimate</name>
        <dbReference type="ChEBI" id="CHEBI:145989"/>
    </ligand>
</feature>
<feature type="binding site" evidence="1">
    <location>
        <position position="179"/>
    </location>
    <ligand>
        <name>phosphoenolpyruvate</name>
        <dbReference type="ChEBI" id="CHEBI:58702"/>
    </ligand>
</feature>
<feature type="binding site" evidence="1">
    <location>
        <position position="329"/>
    </location>
    <ligand>
        <name>3-phosphoshikimate</name>
        <dbReference type="ChEBI" id="CHEBI:145989"/>
    </ligand>
</feature>
<feature type="binding site" evidence="1">
    <location>
        <position position="356"/>
    </location>
    <ligand>
        <name>3-phosphoshikimate</name>
        <dbReference type="ChEBI" id="CHEBI:145989"/>
    </ligand>
</feature>
<feature type="binding site" evidence="1">
    <location>
        <position position="360"/>
    </location>
    <ligand>
        <name>phosphoenolpyruvate</name>
        <dbReference type="ChEBI" id="CHEBI:58702"/>
    </ligand>
</feature>
<feature type="binding site" evidence="1">
    <location>
        <position position="402"/>
    </location>
    <ligand>
        <name>phosphoenolpyruvate</name>
        <dbReference type="ChEBI" id="CHEBI:58702"/>
    </ligand>
</feature>
<gene>
    <name evidence="1" type="primary">aroA</name>
    <name type="ordered locus">PMN2A_0049</name>
</gene>
<comment type="function">
    <text evidence="1">Catalyzes the transfer of the enolpyruvyl moiety of phosphoenolpyruvate (PEP) to the 5-hydroxyl of shikimate-3-phosphate (S3P) to produce enolpyruvyl shikimate-3-phosphate and inorganic phosphate.</text>
</comment>
<comment type="catalytic activity">
    <reaction evidence="1">
        <text>3-phosphoshikimate + phosphoenolpyruvate = 5-O-(1-carboxyvinyl)-3-phosphoshikimate + phosphate</text>
        <dbReference type="Rhea" id="RHEA:21256"/>
        <dbReference type="ChEBI" id="CHEBI:43474"/>
        <dbReference type="ChEBI" id="CHEBI:57701"/>
        <dbReference type="ChEBI" id="CHEBI:58702"/>
        <dbReference type="ChEBI" id="CHEBI:145989"/>
        <dbReference type="EC" id="2.5.1.19"/>
    </reaction>
    <physiologicalReaction direction="left-to-right" evidence="1">
        <dbReference type="Rhea" id="RHEA:21257"/>
    </physiologicalReaction>
</comment>
<comment type="pathway">
    <text evidence="1">Metabolic intermediate biosynthesis; chorismate biosynthesis; chorismate from D-erythrose 4-phosphate and phosphoenolpyruvate: step 6/7.</text>
</comment>
<comment type="subunit">
    <text evidence="1">Monomer.</text>
</comment>
<comment type="subcellular location">
    <subcellularLocation>
        <location evidence="1">Cytoplasm</location>
    </subcellularLocation>
</comment>
<comment type="similarity">
    <text evidence="1">Belongs to the EPSP synthase family.</text>
</comment>
<name>AROA_PROMT</name>
<organism>
    <name type="scientific">Prochlorococcus marinus (strain NATL2A)</name>
    <dbReference type="NCBI Taxonomy" id="59920"/>
    <lineage>
        <taxon>Bacteria</taxon>
        <taxon>Bacillati</taxon>
        <taxon>Cyanobacteriota</taxon>
        <taxon>Cyanophyceae</taxon>
        <taxon>Synechococcales</taxon>
        <taxon>Prochlorococcaceae</taxon>
        <taxon>Prochlorococcus</taxon>
    </lineage>
</organism>
<dbReference type="EC" id="2.5.1.19" evidence="1"/>
<dbReference type="EMBL" id="CP000095">
    <property type="protein sequence ID" value="AAZ57541.1"/>
    <property type="molecule type" value="Genomic_DNA"/>
</dbReference>
<dbReference type="RefSeq" id="WP_011293583.1">
    <property type="nucleotide sequence ID" value="NC_007335.2"/>
</dbReference>
<dbReference type="SMR" id="Q46LT7"/>
<dbReference type="STRING" id="59920.PMN2A_0049"/>
<dbReference type="KEGG" id="pmn:PMN2A_0049"/>
<dbReference type="HOGENOM" id="CLU_024321_0_1_3"/>
<dbReference type="OrthoDB" id="9809920at2"/>
<dbReference type="PhylomeDB" id="Q46LT7"/>
<dbReference type="UniPathway" id="UPA00053">
    <property type="reaction ID" value="UER00089"/>
</dbReference>
<dbReference type="Proteomes" id="UP000002535">
    <property type="component" value="Chromosome"/>
</dbReference>
<dbReference type="GO" id="GO:0005737">
    <property type="term" value="C:cytoplasm"/>
    <property type="evidence" value="ECO:0007669"/>
    <property type="project" value="UniProtKB-SubCell"/>
</dbReference>
<dbReference type="GO" id="GO:0003866">
    <property type="term" value="F:3-phosphoshikimate 1-carboxyvinyltransferase activity"/>
    <property type="evidence" value="ECO:0007669"/>
    <property type="project" value="UniProtKB-UniRule"/>
</dbReference>
<dbReference type="GO" id="GO:0008652">
    <property type="term" value="P:amino acid biosynthetic process"/>
    <property type="evidence" value="ECO:0007669"/>
    <property type="project" value="UniProtKB-KW"/>
</dbReference>
<dbReference type="GO" id="GO:0009073">
    <property type="term" value="P:aromatic amino acid family biosynthetic process"/>
    <property type="evidence" value="ECO:0007669"/>
    <property type="project" value="UniProtKB-KW"/>
</dbReference>
<dbReference type="GO" id="GO:0009423">
    <property type="term" value="P:chorismate biosynthetic process"/>
    <property type="evidence" value="ECO:0007669"/>
    <property type="project" value="UniProtKB-UniRule"/>
</dbReference>
<dbReference type="CDD" id="cd01556">
    <property type="entry name" value="EPSP_synthase"/>
    <property type="match status" value="1"/>
</dbReference>
<dbReference type="FunFam" id="3.65.10.10:FF:000005">
    <property type="entry name" value="3-phosphoshikimate 1-carboxyvinyltransferase"/>
    <property type="match status" value="1"/>
</dbReference>
<dbReference type="Gene3D" id="3.65.10.10">
    <property type="entry name" value="Enolpyruvate transferase domain"/>
    <property type="match status" value="2"/>
</dbReference>
<dbReference type="HAMAP" id="MF_00210">
    <property type="entry name" value="EPSP_synth"/>
    <property type="match status" value="1"/>
</dbReference>
<dbReference type="InterPro" id="IPR001986">
    <property type="entry name" value="Enolpyruvate_Tfrase_dom"/>
</dbReference>
<dbReference type="InterPro" id="IPR036968">
    <property type="entry name" value="Enolpyruvate_Tfrase_sf"/>
</dbReference>
<dbReference type="InterPro" id="IPR006264">
    <property type="entry name" value="EPSP_synthase"/>
</dbReference>
<dbReference type="InterPro" id="IPR023193">
    <property type="entry name" value="EPSP_synthase_CS"/>
</dbReference>
<dbReference type="InterPro" id="IPR013792">
    <property type="entry name" value="RNA3'P_cycl/enolpyr_Trfase_a/b"/>
</dbReference>
<dbReference type="NCBIfam" id="TIGR01356">
    <property type="entry name" value="aroA"/>
    <property type="match status" value="1"/>
</dbReference>
<dbReference type="PANTHER" id="PTHR21090">
    <property type="entry name" value="AROM/DEHYDROQUINATE SYNTHASE"/>
    <property type="match status" value="1"/>
</dbReference>
<dbReference type="PANTHER" id="PTHR21090:SF5">
    <property type="entry name" value="PENTAFUNCTIONAL AROM POLYPEPTIDE"/>
    <property type="match status" value="1"/>
</dbReference>
<dbReference type="Pfam" id="PF00275">
    <property type="entry name" value="EPSP_synthase"/>
    <property type="match status" value="1"/>
</dbReference>
<dbReference type="PIRSF" id="PIRSF000505">
    <property type="entry name" value="EPSPS"/>
    <property type="match status" value="1"/>
</dbReference>
<dbReference type="SUPFAM" id="SSF55205">
    <property type="entry name" value="EPT/RTPC-like"/>
    <property type="match status" value="1"/>
</dbReference>
<dbReference type="PROSITE" id="PS00104">
    <property type="entry name" value="EPSP_SYNTHASE_1"/>
    <property type="match status" value="1"/>
</dbReference>
<dbReference type="PROSITE" id="PS00885">
    <property type="entry name" value="EPSP_SYNTHASE_2"/>
    <property type="match status" value="1"/>
</dbReference>
<sequence length="444" mass="47514">MNAPTKDQSLRNLQKGGELCGKVKVPGDKSISHRALLFGAIAKGKTLIEGLLPAEDPLSTAECLRSMGVKISPIKKGDIIEIEGVGLNGLQEPQDILNCGNSGTTMRLIMGLLAGQKDHHFILTGDKSLRNRPMKRVGQPLKMMGAKVFGRCGGNLAPLSIIGNKLRGAVIGTPVASAQIKSAILLAALNAEGSTTVIEPARSRDHSERMLKAFGANLEVGGEMGRHITVSPGKDLKGQSIIVPGDISSAAFWLIAGSIIPGSELVVENVGLNPTRTGILDVLEEMEANINVINKRDVAGEPVGDIEVFYKENLKPFKIDGEIMPRLVDEIPILSVGACFCNGISQIKGASELRVKETDRLAVMARQLKRMGASVDEHQDGLTIYGGKSLEGCELDSEDDHRIAMSLAIASIMANSNSTLRRSEAAAISYPDFWSDLKRLQQKN</sequence>
<protein>
    <recommendedName>
        <fullName evidence="1">3-phosphoshikimate 1-carboxyvinyltransferase</fullName>
        <ecNumber evidence="1">2.5.1.19</ecNumber>
    </recommendedName>
    <alternativeName>
        <fullName evidence="1">5-enolpyruvylshikimate-3-phosphate synthase</fullName>
        <shortName evidence="1">EPSP synthase</shortName>
        <shortName evidence="1">EPSPS</shortName>
    </alternativeName>
</protein>
<proteinExistence type="inferred from homology"/>
<evidence type="ECO:0000255" key="1">
    <source>
        <dbReference type="HAMAP-Rule" id="MF_00210"/>
    </source>
</evidence>
<keyword id="KW-0028">Amino-acid biosynthesis</keyword>
<keyword id="KW-0057">Aromatic amino acid biosynthesis</keyword>
<keyword id="KW-0963">Cytoplasm</keyword>
<keyword id="KW-1185">Reference proteome</keyword>
<keyword id="KW-0808">Transferase</keyword>
<reference key="1">
    <citation type="journal article" date="2007" name="PLoS Genet.">
        <title>Patterns and implications of gene gain and loss in the evolution of Prochlorococcus.</title>
        <authorList>
            <person name="Kettler G.C."/>
            <person name="Martiny A.C."/>
            <person name="Huang K."/>
            <person name="Zucker J."/>
            <person name="Coleman M.L."/>
            <person name="Rodrigue S."/>
            <person name="Chen F."/>
            <person name="Lapidus A."/>
            <person name="Ferriera S."/>
            <person name="Johnson J."/>
            <person name="Steglich C."/>
            <person name="Church G.M."/>
            <person name="Richardson P."/>
            <person name="Chisholm S.W."/>
        </authorList>
    </citation>
    <scope>NUCLEOTIDE SEQUENCE [LARGE SCALE GENOMIC DNA]</scope>
    <source>
        <strain>NATL2A</strain>
    </source>
</reference>